<reference key="1">
    <citation type="journal article" date="2009" name="Environ. Microbiol.">
        <title>Contribution of mobile genetic elements to Desulfovibrio vulgaris genome plasticity.</title>
        <authorList>
            <person name="Walker C.B."/>
            <person name="Stolyar S."/>
            <person name="Chivian D."/>
            <person name="Pinel N."/>
            <person name="Gabster J.A."/>
            <person name="Dehal P.S."/>
            <person name="He Z."/>
            <person name="Yang Z.K."/>
            <person name="Yen H.C."/>
            <person name="Zhou J."/>
            <person name="Wall J.D."/>
            <person name="Hazen T.C."/>
            <person name="Arkin A.P."/>
            <person name="Stahl D.A."/>
        </authorList>
    </citation>
    <scope>NUCLEOTIDE SEQUENCE [LARGE SCALE GENOMIC DNA]</scope>
    <source>
        <strain>DP4</strain>
    </source>
</reference>
<proteinExistence type="inferred from homology"/>
<dbReference type="EC" id="2.7.2.1" evidence="1"/>
<dbReference type="EMBL" id="CP000527">
    <property type="protein sequence ID" value="ABM27366.1"/>
    <property type="molecule type" value="Genomic_DNA"/>
</dbReference>
<dbReference type="RefSeq" id="WP_011791553.1">
    <property type="nucleotide sequence ID" value="NC_008751.1"/>
</dbReference>
<dbReference type="SMR" id="A1VAA0"/>
<dbReference type="KEGG" id="dvl:Dvul_0343"/>
<dbReference type="HOGENOM" id="CLU_020352_0_1_7"/>
<dbReference type="UniPathway" id="UPA00340">
    <property type="reaction ID" value="UER00458"/>
</dbReference>
<dbReference type="Proteomes" id="UP000009173">
    <property type="component" value="Chromosome"/>
</dbReference>
<dbReference type="GO" id="GO:0005737">
    <property type="term" value="C:cytoplasm"/>
    <property type="evidence" value="ECO:0007669"/>
    <property type="project" value="UniProtKB-SubCell"/>
</dbReference>
<dbReference type="GO" id="GO:0008776">
    <property type="term" value="F:acetate kinase activity"/>
    <property type="evidence" value="ECO:0007669"/>
    <property type="project" value="UniProtKB-UniRule"/>
</dbReference>
<dbReference type="GO" id="GO:0005524">
    <property type="term" value="F:ATP binding"/>
    <property type="evidence" value="ECO:0007669"/>
    <property type="project" value="UniProtKB-KW"/>
</dbReference>
<dbReference type="GO" id="GO:0000287">
    <property type="term" value="F:magnesium ion binding"/>
    <property type="evidence" value="ECO:0007669"/>
    <property type="project" value="UniProtKB-UniRule"/>
</dbReference>
<dbReference type="GO" id="GO:0006083">
    <property type="term" value="P:acetate metabolic process"/>
    <property type="evidence" value="ECO:0007669"/>
    <property type="project" value="TreeGrafter"/>
</dbReference>
<dbReference type="GO" id="GO:0006085">
    <property type="term" value="P:acetyl-CoA biosynthetic process"/>
    <property type="evidence" value="ECO:0007669"/>
    <property type="project" value="UniProtKB-UniRule"/>
</dbReference>
<dbReference type="CDD" id="cd24010">
    <property type="entry name" value="ASKHA_NBD_AcK_PK"/>
    <property type="match status" value="1"/>
</dbReference>
<dbReference type="Gene3D" id="3.30.420.40">
    <property type="match status" value="2"/>
</dbReference>
<dbReference type="HAMAP" id="MF_00020">
    <property type="entry name" value="Acetate_kinase"/>
    <property type="match status" value="1"/>
</dbReference>
<dbReference type="InterPro" id="IPR004372">
    <property type="entry name" value="Ac/propionate_kinase"/>
</dbReference>
<dbReference type="InterPro" id="IPR000890">
    <property type="entry name" value="Aliphatic_acid_kin_short-chain"/>
</dbReference>
<dbReference type="InterPro" id="IPR023865">
    <property type="entry name" value="Aliphatic_acid_kinase_CS"/>
</dbReference>
<dbReference type="InterPro" id="IPR043129">
    <property type="entry name" value="ATPase_NBD"/>
</dbReference>
<dbReference type="NCBIfam" id="TIGR00016">
    <property type="entry name" value="ackA"/>
    <property type="match status" value="1"/>
</dbReference>
<dbReference type="PANTHER" id="PTHR21060">
    <property type="entry name" value="ACETATE KINASE"/>
    <property type="match status" value="1"/>
</dbReference>
<dbReference type="PANTHER" id="PTHR21060:SF15">
    <property type="entry name" value="ACETATE KINASE-RELATED"/>
    <property type="match status" value="1"/>
</dbReference>
<dbReference type="Pfam" id="PF00871">
    <property type="entry name" value="Acetate_kinase"/>
    <property type="match status" value="1"/>
</dbReference>
<dbReference type="PIRSF" id="PIRSF000722">
    <property type="entry name" value="Acetate_prop_kin"/>
    <property type="match status" value="1"/>
</dbReference>
<dbReference type="PRINTS" id="PR00471">
    <property type="entry name" value="ACETATEKNASE"/>
</dbReference>
<dbReference type="SUPFAM" id="SSF53067">
    <property type="entry name" value="Actin-like ATPase domain"/>
    <property type="match status" value="2"/>
</dbReference>
<dbReference type="PROSITE" id="PS01075">
    <property type="entry name" value="ACETATE_KINASE_1"/>
    <property type="match status" value="1"/>
</dbReference>
<dbReference type="PROSITE" id="PS01076">
    <property type="entry name" value="ACETATE_KINASE_2"/>
    <property type="match status" value="1"/>
</dbReference>
<gene>
    <name evidence="1" type="primary">ackA</name>
    <name type="ordered locus">Dvul_0343</name>
</gene>
<name>ACKA_NITV4</name>
<evidence type="ECO:0000255" key="1">
    <source>
        <dbReference type="HAMAP-Rule" id="MF_00020"/>
    </source>
</evidence>
<comment type="function">
    <text evidence="1">Catalyzes the formation of acetyl phosphate from acetate and ATP. Can also catalyze the reverse reaction.</text>
</comment>
<comment type="catalytic activity">
    <reaction evidence="1">
        <text>acetate + ATP = acetyl phosphate + ADP</text>
        <dbReference type="Rhea" id="RHEA:11352"/>
        <dbReference type="ChEBI" id="CHEBI:22191"/>
        <dbReference type="ChEBI" id="CHEBI:30089"/>
        <dbReference type="ChEBI" id="CHEBI:30616"/>
        <dbReference type="ChEBI" id="CHEBI:456216"/>
        <dbReference type="EC" id="2.7.2.1"/>
    </reaction>
</comment>
<comment type="cofactor">
    <cofactor evidence="1">
        <name>Mg(2+)</name>
        <dbReference type="ChEBI" id="CHEBI:18420"/>
    </cofactor>
    <cofactor evidence="1">
        <name>Mn(2+)</name>
        <dbReference type="ChEBI" id="CHEBI:29035"/>
    </cofactor>
    <text evidence="1">Mg(2+). Can also accept Mn(2+).</text>
</comment>
<comment type="pathway">
    <text evidence="1">Metabolic intermediate biosynthesis; acetyl-CoA biosynthesis; acetyl-CoA from acetate: step 1/2.</text>
</comment>
<comment type="subunit">
    <text evidence="1">Homodimer.</text>
</comment>
<comment type="subcellular location">
    <subcellularLocation>
        <location evidence="1">Cytoplasm</location>
    </subcellularLocation>
</comment>
<comment type="similarity">
    <text evidence="1">Belongs to the acetokinase family.</text>
</comment>
<keyword id="KW-0067">ATP-binding</keyword>
<keyword id="KW-0963">Cytoplasm</keyword>
<keyword id="KW-0418">Kinase</keyword>
<keyword id="KW-0460">Magnesium</keyword>
<keyword id="KW-0479">Metal-binding</keyword>
<keyword id="KW-0547">Nucleotide-binding</keyword>
<keyword id="KW-0808">Transferase</keyword>
<organism>
    <name type="scientific">Nitratidesulfovibrio vulgaris (strain DP4)</name>
    <name type="common">Desulfovibrio vulgaris</name>
    <dbReference type="NCBI Taxonomy" id="391774"/>
    <lineage>
        <taxon>Bacteria</taxon>
        <taxon>Pseudomonadati</taxon>
        <taxon>Thermodesulfobacteriota</taxon>
        <taxon>Desulfovibrionia</taxon>
        <taxon>Desulfovibrionales</taxon>
        <taxon>Desulfovibrionaceae</taxon>
        <taxon>Nitratidesulfovibrio</taxon>
    </lineage>
</organism>
<feature type="chain" id="PRO_1000002230" description="Acetate kinase">
    <location>
        <begin position="1"/>
        <end position="402"/>
    </location>
</feature>
<feature type="active site" description="Proton donor/acceptor" evidence="1">
    <location>
        <position position="152"/>
    </location>
</feature>
<feature type="binding site" evidence="1">
    <location>
        <position position="7"/>
    </location>
    <ligand>
        <name>Mg(2+)</name>
        <dbReference type="ChEBI" id="CHEBI:18420"/>
    </ligand>
</feature>
<feature type="binding site" evidence="1">
    <location>
        <position position="14"/>
    </location>
    <ligand>
        <name>ATP</name>
        <dbReference type="ChEBI" id="CHEBI:30616"/>
    </ligand>
</feature>
<feature type="binding site" evidence="1">
    <location>
        <position position="95"/>
    </location>
    <ligand>
        <name>substrate</name>
    </ligand>
</feature>
<feature type="binding site" evidence="1">
    <location>
        <begin position="212"/>
        <end position="216"/>
    </location>
    <ligand>
        <name>ATP</name>
        <dbReference type="ChEBI" id="CHEBI:30616"/>
    </ligand>
</feature>
<feature type="binding site" evidence="1">
    <location>
        <begin position="286"/>
        <end position="288"/>
    </location>
    <ligand>
        <name>ATP</name>
        <dbReference type="ChEBI" id="CHEBI:30616"/>
    </ligand>
</feature>
<feature type="binding site" evidence="1">
    <location>
        <begin position="334"/>
        <end position="338"/>
    </location>
    <ligand>
        <name>ATP</name>
        <dbReference type="ChEBI" id="CHEBI:30616"/>
    </ligand>
</feature>
<feature type="binding site" evidence="1">
    <location>
        <position position="388"/>
    </location>
    <ligand>
        <name>Mg(2+)</name>
        <dbReference type="ChEBI" id="CHEBI:18420"/>
    </ligand>
</feature>
<feature type="site" description="Transition state stabilizer" evidence="1">
    <location>
        <position position="184"/>
    </location>
</feature>
<feature type="site" description="Transition state stabilizer" evidence="1">
    <location>
        <position position="245"/>
    </location>
</feature>
<protein>
    <recommendedName>
        <fullName evidence="1">Acetate kinase</fullName>
        <ecNumber evidence="1">2.7.2.1</ecNumber>
    </recommendedName>
    <alternativeName>
        <fullName evidence="1">Acetokinase</fullName>
    </alternativeName>
</protein>
<sequence length="402" mass="44104">MNVLVINSGSSSIKYQLIDMEREVPLCSGLVERIGEPMGKLTHKIRPDAEGEEKLTFEQPFTNHVEGMKRVVELITDADKGVIKDKSEIGAIGHRVLLGGEEIKQSVRIDDWAKGVIRDYIPLGPLHNPANLAGIEVAEELFPGLPNVGVFDTEFHQSMPAKAYLYPLPIELYEELKIRRYGFHGTSHRYITKRTAQYLGKPLDELNIITCHLGNGCSMAAVKNGKCVDTTMGITPLEGLMMGTRCGDIDPAIVPFLMEKKNLSPAEADTLMNKQSGLKGVCGMNDMRDLHAARENGNERAQLAFEMFTYRIKKYIGAYYAVLGRVDAVVFTAGIGENDDFVRAEVCAGLDSLGIAVDPARNAVRNGQPRHISPDGSRVAVLVVPTNEELEIAQATLDVLKG</sequence>
<accession>A1VAA0</accession>